<sequence length="708" mass="81465">MATGRIQFAVSTPCNTKGKPSGYRLFEFKNDRLALVPSERGCTKVDVNANIQAFCYLRPNGRDTSISPDATHILDSCDYMVLAKSNGFIEIISNYQYKIKNGLRLAPSYILRCTPEDFESNFFSDYMIAGLEYSQGLLYCCMCSGRIYVFVMNLPTDYIQYKNMYNPMFPDCFFKVHHDNNTTHSSEEEKLFEGSTRYTGRSCSKHICYFLLPIEPSHLRSSPVVSSFCNMYQGLPIYRPSMYLHIERGISTFHINPLDRFCFMTVSPRSPLFIRKIILPLTYVTFLSTFISLKNSIQGDTCGEILSWDNVAQQNGFGSLFSWISNKFTFDTDIINSTIWDDIVKYSGTGMLDSGIVWKQRQGHAKDDIYELFHTQDMLGSSRRNSSFSTASSEPRPLSRRRRESFQALTRDAFRERMDVPCSTKWELDSFIRGLRRNTFMVDFEIVEKISHRNGNDGVNEDDNTTDESDETMTSFLTDNYKKMDIVCIDHFVTLSAFRPRYYDEPIIKIDSLSNKNGSENGTNEEEWAESQMKVDGQVIDDETAQFKQALGNLCSFKKLFMLDDSLCFILDTHGVLLINRFEIKNTKNLLRNSKDTIRIIPHDFGLINDTIVIINDIDVGTDNVCALTFHLVVTSMAGEITVLKGEFFKNCRLGRIKLCDSLKLNRKDRFVDKLALIDYDGLNAQKRRLDYDEKDLYTFIVKKVKRD</sequence>
<keyword id="KW-0002">3D-structure</keyword>
<keyword id="KW-1185">Reference proteome</keyword>
<proteinExistence type="evidence at protein level"/>
<accession>Q12027</accession>
<accession>D6VRH6</accession>
<reference key="1">
    <citation type="journal article" date="1997" name="Nature">
        <title>The nucleotide sequence of Saccharomyces cerevisiae chromosome IV.</title>
        <authorList>
            <person name="Jacq C."/>
            <person name="Alt-Moerbe J."/>
            <person name="Andre B."/>
            <person name="Arnold W."/>
            <person name="Bahr A."/>
            <person name="Ballesta J.P.G."/>
            <person name="Bargues M."/>
            <person name="Baron L."/>
            <person name="Becker A."/>
            <person name="Biteau N."/>
            <person name="Bloecker H."/>
            <person name="Blugeon C."/>
            <person name="Boskovic J."/>
            <person name="Brandt P."/>
            <person name="Brueckner M."/>
            <person name="Buitrago M.J."/>
            <person name="Coster F."/>
            <person name="Delaveau T."/>
            <person name="del Rey F."/>
            <person name="Dujon B."/>
            <person name="Eide L.G."/>
            <person name="Garcia-Cantalejo J.M."/>
            <person name="Goffeau A."/>
            <person name="Gomez-Peris A."/>
            <person name="Granotier C."/>
            <person name="Hanemann V."/>
            <person name="Hankeln T."/>
            <person name="Hoheisel J.D."/>
            <person name="Jaeger W."/>
            <person name="Jimenez A."/>
            <person name="Jonniaux J.-L."/>
            <person name="Kraemer C."/>
            <person name="Kuester H."/>
            <person name="Laamanen P."/>
            <person name="Legros Y."/>
            <person name="Louis E.J."/>
            <person name="Moeller-Rieker S."/>
            <person name="Monnet A."/>
            <person name="Moro M."/>
            <person name="Mueller-Auer S."/>
            <person name="Nussbaumer B."/>
            <person name="Paricio N."/>
            <person name="Paulin L."/>
            <person name="Perea J."/>
            <person name="Perez-Alonso M."/>
            <person name="Perez-Ortin J.E."/>
            <person name="Pohl T.M."/>
            <person name="Prydz H."/>
            <person name="Purnelle B."/>
            <person name="Rasmussen S.W."/>
            <person name="Remacha M.A."/>
            <person name="Revuelta J.L."/>
            <person name="Rieger M."/>
            <person name="Salom D."/>
            <person name="Saluz H.P."/>
            <person name="Saiz J.E."/>
            <person name="Saren A.-M."/>
            <person name="Schaefer M."/>
            <person name="Scharfe M."/>
            <person name="Schmidt E.R."/>
            <person name="Schneider C."/>
            <person name="Scholler P."/>
            <person name="Schwarz S."/>
            <person name="Soler-Mira A."/>
            <person name="Urrestarazu L.A."/>
            <person name="Verhasselt P."/>
            <person name="Vissers S."/>
            <person name="Voet M."/>
            <person name="Volckaert G."/>
            <person name="Wagner G."/>
            <person name="Wambutt R."/>
            <person name="Wedler E."/>
            <person name="Wedler H."/>
            <person name="Woelfl S."/>
            <person name="Harris D.E."/>
            <person name="Bowman S."/>
            <person name="Brown D."/>
            <person name="Churcher C.M."/>
            <person name="Connor R."/>
            <person name="Dedman K."/>
            <person name="Gentles S."/>
            <person name="Hamlin N."/>
            <person name="Hunt S."/>
            <person name="Jones L."/>
            <person name="McDonald S."/>
            <person name="Murphy L.D."/>
            <person name="Niblett D."/>
            <person name="Odell C."/>
            <person name="Oliver K."/>
            <person name="Rajandream M.A."/>
            <person name="Richards C."/>
            <person name="Shore L."/>
            <person name="Walsh S.V."/>
            <person name="Barrell B.G."/>
            <person name="Dietrich F.S."/>
            <person name="Mulligan J.T."/>
            <person name="Allen E."/>
            <person name="Araujo R."/>
            <person name="Aviles E."/>
            <person name="Berno A."/>
            <person name="Carpenter J."/>
            <person name="Chen E."/>
            <person name="Cherry J.M."/>
            <person name="Chung E."/>
            <person name="Duncan M."/>
            <person name="Hunicke-Smith S."/>
            <person name="Hyman R.W."/>
            <person name="Komp C."/>
            <person name="Lashkari D."/>
            <person name="Lew H."/>
            <person name="Lin D."/>
            <person name="Mosedale D."/>
            <person name="Nakahara K."/>
            <person name="Namath A."/>
            <person name="Oefner P."/>
            <person name="Oh C."/>
            <person name="Petel F.X."/>
            <person name="Roberts D."/>
            <person name="Schramm S."/>
            <person name="Schroeder M."/>
            <person name="Shogren T."/>
            <person name="Shroff N."/>
            <person name="Winant A."/>
            <person name="Yelton M.A."/>
            <person name="Botstein D."/>
            <person name="Davis R.W."/>
            <person name="Johnston M."/>
            <person name="Andrews S."/>
            <person name="Brinkman R."/>
            <person name="Cooper J."/>
            <person name="Ding H."/>
            <person name="Du Z."/>
            <person name="Favello A."/>
            <person name="Fulton L."/>
            <person name="Gattung S."/>
            <person name="Greco T."/>
            <person name="Hallsworth K."/>
            <person name="Hawkins J."/>
            <person name="Hillier L.W."/>
            <person name="Jier M."/>
            <person name="Johnson D."/>
            <person name="Johnston L."/>
            <person name="Kirsten J."/>
            <person name="Kucaba T."/>
            <person name="Langston Y."/>
            <person name="Latreille P."/>
            <person name="Le T."/>
            <person name="Mardis E."/>
            <person name="Menezes S."/>
            <person name="Miller N."/>
            <person name="Nhan M."/>
            <person name="Pauley A."/>
            <person name="Peluso D."/>
            <person name="Rifkin L."/>
            <person name="Riles L."/>
            <person name="Taich A."/>
            <person name="Trevaskis E."/>
            <person name="Vignati D."/>
            <person name="Wilcox L."/>
            <person name="Wohldman P."/>
            <person name="Vaudin M."/>
            <person name="Wilson R."/>
            <person name="Waterston R."/>
            <person name="Albermann K."/>
            <person name="Hani J."/>
            <person name="Heumann K."/>
            <person name="Kleine K."/>
            <person name="Mewes H.-W."/>
            <person name="Zollner A."/>
            <person name="Zaccaria P."/>
        </authorList>
    </citation>
    <scope>NUCLEOTIDE SEQUENCE [LARGE SCALE GENOMIC DNA]</scope>
    <source>
        <strain>ATCC 204508 / S288c</strain>
    </source>
</reference>
<reference key="2">
    <citation type="journal article" date="2014" name="G3 (Bethesda)">
        <title>The reference genome sequence of Saccharomyces cerevisiae: Then and now.</title>
        <authorList>
            <person name="Engel S.R."/>
            <person name="Dietrich F.S."/>
            <person name="Fisk D.G."/>
            <person name="Binkley G."/>
            <person name="Balakrishnan R."/>
            <person name="Costanzo M.C."/>
            <person name="Dwight S.S."/>
            <person name="Hitz B.C."/>
            <person name="Karra K."/>
            <person name="Nash R.S."/>
            <person name="Weng S."/>
            <person name="Wong E.D."/>
            <person name="Lloyd P."/>
            <person name="Skrzypek M.S."/>
            <person name="Miyasato S.R."/>
            <person name="Simison M."/>
            <person name="Cherry J.M."/>
        </authorList>
    </citation>
    <scope>GENOME REANNOTATION</scope>
    <source>
        <strain>ATCC 204508 / S288c</strain>
    </source>
</reference>
<reference key="3">
    <citation type="journal article" date="2003" name="Nature">
        <title>Global analysis of protein expression in yeast.</title>
        <authorList>
            <person name="Ghaemmaghami S."/>
            <person name="Huh W.-K."/>
            <person name="Bower K."/>
            <person name="Howson R.W."/>
            <person name="Belle A."/>
            <person name="Dephoure N."/>
            <person name="O'Shea E.K."/>
            <person name="Weissman J.S."/>
        </authorList>
    </citation>
    <scope>LEVEL OF PROTEIN EXPRESSION [LARGE SCALE ANALYSIS]</scope>
</reference>
<reference key="4">
    <citation type="journal article" date="2006" name="BMC Bioinformatics">
        <title>PIPE: a protein-protein interaction prediction engine based on the re-occurring short polypeptide sequences between known interacting protein pairs.</title>
        <authorList>
            <person name="Pitre S."/>
            <person name="Dehne F."/>
            <person name="Chan A."/>
            <person name="Cheetham J."/>
            <person name="Duong A."/>
            <person name="Emili A."/>
            <person name="Gebbia M."/>
            <person name="Greenblatt J."/>
            <person name="Jessulat M."/>
            <person name="Krogan N."/>
            <person name="Luo X."/>
            <person name="Golshani A."/>
        </authorList>
    </citation>
    <scope>IDENTIFICATION IN GID COMPLEX</scope>
</reference>
<reference key="5">
    <citation type="journal article" date="2020" name="Mol. Syst. Biol.">
        <title>Systematic genetics and single-cell imaging reveal widespread morphological pleiotropy and cell-to-cell variability.</title>
        <authorList>
            <person name="Mattiazzi Usaj M."/>
            <person name="Sahin N."/>
            <person name="Friesen H."/>
            <person name="Pons C."/>
            <person name="Usaj M."/>
            <person name="Masinas M.P.D."/>
            <person name="Shuteriqi E."/>
            <person name="Shkurin A."/>
            <person name="Aloy P."/>
            <person name="Morris Q."/>
            <person name="Boone C."/>
            <person name="Andrews B.J."/>
        </authorList>
    </citation>
    <scope>DISRUPTION PHENOTYPE</scope>
</reference>
<reference evidence="11" key="6">
    <citation type="journal article" date="2022" name="Nat. Commun.">
        <title>Cryo-EM structures of Gid12-bound GID E3 reveal steric blockade as a mechanism inhibiting substrate ubiquitylation.</title>
        <authorList>
            <person name="Qiao S."/>
            <person name="Lee C.W."/>
            <person name="Sherpa D."/>
            <person name="Chrustowicz J."/>
            <person name="Cheng J."/>
            <person name="Duennebacke M."/>
            <person name="Steigenberger B."/>
            <person name="Karayel O."/>
            <person name="Vu D.T."/>
            <person name="von Gronau S."/>
            <person name="Mann M."/>
            <person name="Wilfling F."/>
            <person name="Schulman B.A."/>
        </authorList>
    </citation>
    <scope>STRUCTURE BY ELECTRON MICROSCOPY (3.30 ANGSTROMS)</scope>
    <scope>SUBUNIT</scope>
</reference>
<protein>
    <recommendedName>
        <fullName evidence="8">GID complex associated protein 12</fullName>
    </recommendedName>
    <alternativeName>
        <fullName evidence="7">Glucose-induced degradation protein 12</fullName>
    </alternativeName>
    <alternativeName>
        <fullName evidence="6">Involved in actin patch formation protein 1</fullName>
    </alternativeName>
</protein>
<dbReference type="EMBL" id="Z67750">
    <property type="protein sequence ID" value="CAA91569.1"/>
    <property type="molecule type" value="Genomic_DNA"/>
</dbReference>
<dbReference type="EMBL" id="Z74224">
    <property type="protein sequence ID" value="CAA98750.1"/>
    <property type="molecule type" value="Genomic_DNA"/>
</dbReference>
<dbReference type="EMBL" id="BK006938">
    <property type="protein sequence ID" value="DAA11686.1"/>
    <property type="molecule type" value="Genomic_DNA"/>
</dbReference>
<dbReference type="PIR" id="S61036">
    <property type="entry name" value="S61036"/>
</dbReference>
<dbReference type="RefSeq" id="NP_010105.1">
    <property type="nucleotide sequence ID" value="NM_001180236.1"/>
</dbReference>
<dbReference type="PDB" id="7WUG">
    <property type="method" value="EM"/>
    <property type="resolution" value="3.30 A"/>
    <property type="chains" value="Y=1-708"/>
</dbReference>
<dbReference type="PDBsum" id="7WUG"/>
<dbReference type="SMR" id="Q12027"/>
<dbReference type="BioGRID" id="31890">
    <property type="interactions" value="76"/>
</dbReference>
<dbReference type="FunCoup" id="Q12027">
    <property type="interactions" value="8"/>
</dbReference>
<dbReference type="IntAct" id="Q12027">
    <property type="interactions" value="9"/>
</dbReference>
<dbReference type="MINT" id="Q12027"/>
<dbReference type="STRING" id="4932.YDL176W"/>
<dbReference type="iPTMnet" id="Q12027"/>
<dbReference type="PaxDb" id="4932-YDL176W"/>
<dbReference type="PeptideAtlas" id="Q12027"/>
<dbReference type="EnsemblFungi" id="YDL176W_mRNA">
    <property type="protein sequence ID" value="YDL176W"/>
    <property type="gene ID" value="YDL176W"/>
</dbReference>
<dbReference type="GeneID" id="851378"/>
<dbReference type="KEGG" id="sce:YDL176W"/>
<dbReference type="AGR" id="SGD:S000002335"/>
<dbReference type="SGD" id="S000002335">
    <property type="gene designation" value="GID12"/>
</dbReference>
<dbReference type="VEuPathDB" id="FungiDB:YDL176W"/>
<dbReference type="eggNOG" id="ENOG502QR5V">
    <property type="taxonomic scope" value="Eukaryota"/>
</dbReference>
<dbReference type="HOGENOM" id="CLU_025347_0_0_1"/>
<dbReference type="InParanoid" id="Q12027"/>
<dbReference type="OMA" id="YIDEPLM"/>
<dbReference type="OrthoDB" id="4036394at2759"/>
<dbReference type="BioCyc" id="YEAST:G3O-29564-MONOMER"/>
<dbReference type="BioGRID-ORCS" id="851378">
    <property type="hits" value="2 hits in 10 CRISPR screens"/>
</dbReference>
<dbReference type="PRO" id="PR:Q12027"/>
<dbReference type="Proteomes" id="UP000002311">
    <property type="component" value="Chromosome IV"/>
</dbReference>
<dbReference type="RNAct" id="Q12027">
    <property type="molecule type" value="protein"/>
</dbReference>
<dbReference type="GO" id="GO:0000147">
    <property type="term" value="P:actin cortical patch assembly"/>
    <property type="evidence" value="ECO:0000315"/>
    <property type="project" value="SGD"/>
</dbReference>
<dbReference type="GO" id="GO:0043254">
    <property type="term" value="P:regulation of protein-containing complex assembly"/>
    <property type="evidence" value="ECO:0000314"/>
    <property type="project" value="SGD"/>
</dbReference>
<organism>
    <name type="scientific">Saccharomyces cerevisiae (strain ATCC 204508 / S288c)</name>
    <name type="common">Baker's yeast</name>
    <dbReference type="NCBI Taxonomy" id="559292"/>
    <lineage>
        <taxon>Eukaryota</taxon>
        <taxon>Fungi</taxon>
        <taxon>Dikarya</taxon>
        <taxon>Ascomycota</taxon>
        <taxon>Saccharomycotina</taxon>
        <taxon>Saccharomycetes</taxon>
        <taxon>Saccharomycetales</taxon>
        <taxon>Saccharomycetaceae</taxon>
        <taxon>Saccharomyces</taxon>
    </lineage>
</organism>
<feature type="chain" id="PRO_0000240880" description="GID complex associated protein 12">
    <location>
        <begin position="1"/>
        <end position="708"/>
    </location>
</feature>
<feature type="region of interest" description="Disordered" evidence="1">
    <location>
        <begin position="381"/>
        <end position="403"/>
    </location>
</feature>
<feature type="compositionally biased region" description="Low complexity" evidence="1">
    <location>
        <begin position="381"/>
        <end position="396"/>
    </location>
</feature>
<feature type="strand" evidence="12">
    <location>
        <begin position="6"/>
        <end position="12"/>
    </location>
</feature>
<feature type="strand" evidence="12">
    <location>
        <begin position="22"/>
        <end position="29"/>
    </location>
</feature>
<feature type="strand" evidence="12">
    <location>
        <begin position="32"/>
        <end position="35"/>
    </location>
</feature>
<feature type="strand" evidence="12">
    <location>
        <begin position="45"/>
        <end position="47"/>
    </location>
</feature>
<feature type="strand" evidence="12">
    <location>
        <begin position="53"/>
        <end position="62"/>
    </location>
</feature>
<feature type="strand" evidence="12">
    <location>
        <begin position="79"/>
        <end position="83"/>
    </location>
</feature>
<feature type="strand" evidence="12">
    <location>
        <begin position="85"/>
        <end position="93"/>
    </location>
</feature>
<feature type="helix" evidence="12">
    <location>
        <begin position="95"/>
        <end position="101"/>
    </location>
</feature>
<feature type="strand" evidence="12">
    <location>
        <begin position="108"/>
        <end position="112"/>
    </location>
</feature>
<feature type="strand" evidence="12">
    <location>
        <begin position="128"/>
        <end position="134"/>
    </location>
</feature>
<feature type="strand" evidence="12">
    <location>
        <begin position="137"/>
        <end position="142"/>
    </location>
</feature>
<feature type="turn" evidence="12">
    <location>
        <begin position="143"/>
        <end position="145"/>
    </location>
</feature>
<feature type="strand" evidence="12">
    <location>
        <begin position="146"/>
        <end position="151"/>
    </location>
</feature>
<feature type="strand" evidence="12">
    <location>
        <begin position="158"/>
        <end position="161"/>
    </location>
</feature>
<feature type="strand" evidence="12">
    <location>
        <begin position="163"/>
        <end position="165"/>
    </location>
</feature>
<feature type="helix" evidence="12">
    <location>
        <begin position="187"/>
        <end position="195"/>
    </location>
</feature>
<feature type="strand" evidence="12">
    <location>
        <begin position="237"/>
        <end position="239"/>
    </location>
</feature>
<feature type="strand" evidence="12">
    <location>
        <begin position="241"/>
        <end position="245"/>
    </location>
</feature>
<feature type="strand" evidence="12">
    <location>
        <begin position="251"/>
        <end position="255"/>
    </location>
</feature>
<feature type="strand" evidence="12">
    <location>
        <begin position="262"/>
        <end position="266"/>
    </location>
</feature>
<feature type="strand" evidence="12">
    <location>
        <begin position="273"/>
        <end position="277"/>
    </location>
</feature>
<feature type="helix" evidence="12">
    <location>
        <begin position="281"/>
        <end position="296"/>
    </location>
</feature>
<feature type="helix" evidence="12">
    <location>
        <begin position="308"/>
        <end position="314"/>
    </location>
</feature>
<feature type="helix" evidence="12">
    <location>
        <begin position="320"/>
        <end position="327"/>
    </location>
</feature>
<feature type="helix" evidence="12">
    <location>
        <begin position="337"/>
        <end position="345"/>
    </location>
</feature>
<feature type="turn" evidence="12">
    <location>
        <begin position="346"/>
        <end position="348"/>
    </location>
</feature>
<feature type="strand" evidence="12">
    <location>
        <begin position="354"/>
        <end position="359"/>
    </location>
</feature>
<feature type="strand" evidence="12">
    <location>
        <begin position="441"/>
        <end position="448"/>
    </location>
</feature>
<feature type="strand" evidence="12">
    <location>
        <begin position="484"/>
        <end position="490"/>
    </location>
</feature>
<feature type="turn" evidence="12">
    <location>
        <begin position="491"/>
        <end position="493"/>
    </location>
</feature>
<feature type="strand" evidence="12">
    <location>
        <begin position="494"/>
        <end position="498"/>
    </location>
</feature>
<feature type="turn" evidence="12">
    <location>
        <begin position="500"/>
        <end position="502"/>
    </location>
</feature>
<feature type="strand" evidence="12">
    <location>
        <begin position="507"/>
        <end position="511"/>
    </location>
</feature>
<feature type="helix" evidence="12">
    <location>
        <begin position="543"/>
        <end position="552"/>
    </location>
</feature>
<feature type="strand" evidence="12">
    <location>
        <begin position="559"/>
        <end position="561"/>
    </location>
</feature>
<feature type="strand" evidence="12">
    <location>
        <begin position="563"/>
        <end position="571"/>
    </location>
</feature>
<feature type="strand" evidence="12">
    <location>
        <begin position="576"/>
        <end position="583"/>
    </location>
</feature>
<feature type="helix" evidence="12">
    <location>
        <begin position="590"/>
        <end position="592"/>
    </location>
</feature>
<feature type="strand" evidence="12">
    <location>
        <begin position="595"/>
        <end position="601"/>
    </location>
</feature>
<feature type="strand" evidence="12">
    <location>
        <begin position="607"/>
        <end position="610"/>
    </location>
</feature>
<feature type="strand" evidence="12">
    <location>
        <begin position="613"/>
        <end position="621"/>
    </location>
</feature>
<feature type="turn" evidence="12">
    <location>
        <begin position="622"/>
        <end position="624"/>
    </location>
</feature>
<feature type="strand" evidence="12">
    <location>
        <begin position="625"/>
        <end position="636"/>
    </location>
</feature>
<feature type="strand" evidence="12">
    <location>
        <begin position="639"/>
        <end position="648"/>
    </location>
</feature>
<feature type="strand" evidence="12">
    <location>
        <begin position="653"/>
        <end position="664"/>
    </location>
</feature>
<feature type="strand" evidence="12">
    <location>
        <begin position="675"/>
        <end position="680"/>
    </location>
</feature>
<comment type="function">
    <text evidence="5 9">Regulator of the GID E3 ligase complex. Modulates both assembly of the substrate receptor GID4 into the GID E3 ligase complex and its activity toward its substrates. GID12-binding remodels the N-degron binding pocket in the GID(SR4) complex, and could limit substrate accessibility of a bulky substrate to a ubiquitynation active site, thereby stabilizing gluconeogenic enzyme substrates (PubMed:35650207). Involved in actin patch formation (Probable).</text>
</comment>
<comment type="subunit">
    <text evidence="3 5">Interacts with core components of the GID/CTLH ubiquitin ligase complex (PubMed:16872538). GID12 binds both the substrate receptor GID4 and the tip of GID5 in the scaffolding module, sealing GID4 onto the scaffold (PubMed:35650207).</text>
</comment>
<comment type="disruption phenotype">
    <text evidence="4">Causes a decrease in the number of actin patches and concomitant accumulation of upstream components like coat patches.</text>
</comment>
<comment type="miscellaneous">
    <text evidence="2">Present with 339 molecules/cell in log phase SD medium.</text>
</comment>
<gene>
    <name evidence="7" type="primary">GID12</name>
    <name evidence="6" type="synonym">IPF1</name>
    <name evidence="10" type="ordered locus">YDL176W</name>
</gene>
<evidence type="ECO:0000256" key="1">
    <source>
        <dbReference type="SAM" id="MobiDB-lite"/>
    </source>
</evidence>
<evidence type="ECO:0000269" key="2">
    <source>
    </source>
</evidence>
<evidence type="ECO:0000269" key="3">
    <source>
    </source>
</evidence>
<evidence type="ECO:0000269" key="4">
    <source>
    </source>
</evidence>
<evidence type="ECO:0000269" key="5">
    <source>
    </source>
</evidence>
<evidence type="ECO:0000303" key="6">
    <source>
    </source>
</evidence>
<evidence type="ECO:0000303" key="7">
    <source>
    </source>
</evidence>
<evidence type="ECO:0000305" key="8"/>
<evidence type="ECO:0000305" key="9">
    <source>
    </source>
</evidence>
<evidence type="ECO:0000312" key="10">
    <source>
        <dbReference type="SGD" id="S000002335"/>
    </source>
</evidence>
<evidence type="ECO:0007744" key="11">
    <source>
        <dbReference type="PDB" id="7WUG"/>
    </source>
</evidence>
<evidence type="ECO:0007829" key="12">
    <source>
        <dbReference type="PDB" id="7WUG"/>
    </source>
</evidence>
<name>GID12_YEAST</name>